<organism>
    <name type="scientific">Bacillus thuringiensis subsp. konkukian (strain 97-27)</name>
    <dbReference type="NCBI Taxonomy" id="281309"/>
    <lineage>
        <taxon>Bacteria</taxon>
        <taxon>Bacillati</taxon>
        <taxon>Bacillota</taxon>
        <taxon>Bacilli</taxon>
        <taxon>Bacillales</taxon>
        <taxon>Bacillaceae</taxon>
        <taxon>Bacillus</taxon>
        <taxon>Bacillus cereus group</taxon>
    </lineage>
</organism>
<protein>
    <recommendedName>
        <fullName evidence="1">Proline--tRNA ligase 2</fullName>
        <ecNumber evidence="1">6.1.1.15</ecNumber>
    </recommendedName>
    <alternativeName>
        <fullName evidence="1">Prolyl-tRNA synthetase 2</fullName>
        <shortName evidence="1">ProRS 2</shortName>
    </alternativeName>
</protein>
<dbReference type="EC" id="6.1.1.15" evidence="1"/>
<dbReference type="EMBL" id="AE017355">
    <property type="protein sequence ID" value="AAT61247.1"/>
    <property type="molecule type" value="Genomic_DNA"/>
</dbReference>
<dbReference type="RefSeq" id="YP_034723.1">
    <property type="nucleotide sequence ID" value="NC_005957.1"/>
</dbReference>
<dbReference type="SMR" id="Q6HNZ7"/>
<dbReference type="KEGG" id="btk:BT9727_0373"/>
<dbReference type="PATRIC" id="fig|281309.8.peg.396"/>
<dbReference type="HOGENOM" id="CLU_001882_4_2_9"/>
<dbReference type="Proteomes" id="UP000001301">
    <property type="component" value="Chromosome"/>
</dbReference>
<dbReference type="GO" id="GO:0017101">
    <property type="term" value="C:aminoacyl-tRNA synthetase multienzyme complex"/>
    <property type="evidence" value="ECO:0007669"/>
    <property type="project" value="TreeGrafter"/>
</dbReference>
<dbReference type="GO" id="GO:0005737">
    <property type="term" value="C:cytoplasm"/>
    <property type="evidence" value="ECO:0007669"/>
    <property type="project" value="UniProtKB-SubCell"/>
</dbReference>
<dbReference type="GO" id="GO:0005524">
    <property type="term" value="F:ATP binding"/>
    <property type="evidence" value="ECO:0007669"/>
    <property type="project" value="UniProtKB-UniRule"/>
</dbReference>
<dbReference type="GO" id="GO:0140096">
    <property type="term" value="F:catalytic activity, acting on a protein"/>
    <property type="evidence" value="ECO:0007669"/>
    <property type="project" value="UniProtKB-ARBA"/>
</dbReference>
<dbReference type="GO" id="GO:0004827">
    <property type="term" value="F:proline-tRNA ligase activity"/>
    <property type="evidence" value="ECO:0007669"/>
    <property type="project" value="UniProtKB-UniRule"/>
</dbReference>
<dbReference type="GO" id="GO:0016740">
    <property type="term" value="F:transferase activity"/>
    <property type="evidence" value="ECO:0007669"/>
    <property type="project" value="UniProtKB-ARBA"/>
</dbReference>
<dbReference type="GO" id="GO:0006433">
    <property type="term" value="P:prolyl-tRNA aminoacylation"/>
    <property type="evidence" value="ECO:0007669"/>
    <property type="project" value="UniProtKB-UniRule"/>
</dbReference>
<dbReference type="CDD" id="cd00862">
    <property type="entry name" value="ProRS_anticodon_zinc"/>
    <property type="match status" value="1"/>
</dbReference>
<dbReference type="CDD" id="cd00778">
    <property type="entry name" value="ProRS_core_arch_euk"/>
    <property type="match status" value="1"/>
</dbReference>
<dbReference type="FunFam" id="3.40.50.800:FF:000005">
    <property type="entry name" value="bifunctional glutamate/proline--tRNA ligase"/>
    <property type="match status" value="1"/>
</dbReference>
<dbReference type="FunFam" id="3.30.110.30:FF:000005">
    <property type="entry name" value="Proline--tRNA ligase"/>
    <property type="match status" value="1"/>
</dbReference>
<dbReference type="FunFam" id="3.30.930.10:FF:000023">
    <property type="entry name" value="Proline--tRNA ligase"/>
    <property type="match status" value="1"/>
</dbReference>
<dbReference type="Gene3D" id="3.40.50.800">
    <property type="entry name" value="Anticodon-binding domain"/>
    <property type="match status" value="1"/>
</dbReference>
<dbReference type="Gene3D" id="3.30.930.10">
    <property type="entry name" value="Bira Bifunctional Protein, Domain 2"/>
    <property type="match status" value="1"/>
</dbReference>
<dbReference type="Gene3D" id="3.30.110.30">
    <property type="entry name" value="C-terminal domain of ProRS"/>
    <property type="match status" value="1"/>
</dbReference>
<dbReference type="HAMAP" id="MF_01571">
    <property type="entry name" value="Pro_tRNA_synth_type3"/>
    <property type="match status" value="1"/>
</dbReference>
<dbReference type="InterPro" id="IPR002314">
    <property type="entry name" value="aa-tRNA-synt_IIb"/>
</dbReference>
<dbReference type="InterPro" id="IPR006195">
    <property type="entry name" value="aa-tRNA-synth_II"/>
</dbReference>
<dbReference type="InterPro" id="IPR045864">
    <property type="entry name" value="aa-tRNA-synth_II/BPL/LPL"/>
</dbReference>
<dbReference type="InterPro" id="IPR004154">
    <property type="entry name" value="Anticodon-bd"/>
</dbReference>
<dbReference type="InterPro" id="IPR036621">
    <property type="entry name" value="Anticodon-bd_dom_sf"/>
</dbReference>
<dbReference type="InterPro" id="IPR002316">
    <property type="entry name" value="Pro-tRNA-ligase_IIa"/>
</dbReference>
<dbReference type="InterPro" id="IPR004499">
    <property type="entry name" value="Pro-tRNA-ligase_IIa_arc-type"/>
</dbReference>
<dbReference type="InterPro" id="IPR016061">
    <property type="entry name" value="Pro-tRNA_ligase_II_C"/>
</dbReference>
<dbReference type="InterPro" id="IPR017449">
    <property type="entry name" value="Pro-tRNA_synth_II"/>
</dbReference>
<dbReference type="InterPro" id="IPR033721">
    <property type="entry name" value="ProRS_core_arch_euk"/>
</dbReference>
<dbReference type="NCBIfam" id="TIGR00408">
    <property type="entry name" value="proS_fam_I"/>
    <property type="match status" value="1"/>
</dbReference>
<dbReference type="PANTHER" id="PTHR43382:SF2">
    <property type="entry name" value="BIFUNCTIONAL GLUTAMATE_PROLINE--TRNA LIGASE"/>
    <property type="match status" value="1"/>
</dbReference>
<dbReference type="PANTHER" id="PTHR43382">
    <property type="entry name" value="PROLYL-TRNA SYNTHETASE"/>
    <property type="match status" value="1"/>
</dbReference>
<dbReference type="Pfam" id="PF03129">
    <property type="entry name" value="HGTP_anticodon"/>
    <property type="match status" value="1"/>
</dbReference>
<dbReference type="Pfam" id="PF09180">
    <property type="entry name" value="ProRS-C_1"/>
    <property type="match status" value="1"/>
</dbReference>
<dbReference type="Pfam" id="PF00587">
    <property type="entry name" value="tRNA-synt_2b"/>
    <property type="match status" value="1"/>
</dbReference>
<dbReference type="PRINTS" id="PR01046">
    <property type="entry name" value="TRNASYNTHPRO"/>
</dbReference>
<dbReference type="SMART" id="SM00946">
    <property type="entry name" value="ProRS-C_1"/>
    <property type="match status" value="1"/>
</dbReference>
<dbReference type="SUPFAM" id="SSF64586">
    <property type="entry name" value="C-terminal domain of ProRS"/>
    <property type="match status" value="1"/>
</dbReference>
<dbReference type="SUPFAM" id="SSF52954">
    <property type="entry name" value="Class II aaRS ABD-related"/>
    <property type="match status" value="1"/>
</dbReference>
<dbReference type="SUPFAM" id="SSF55681">
    <property type="entry name" value="Class II aaRS and biotin synthetases"/>
    <property type="match status" value="1"/>
</dbReference>
<dbReference type="PROSITE" id="PS50862">
    <property type="entry name" value="AA_TRNA_LIGASE_II"/>
    <property type="match status" value="1"/>
</dbReference>
<comment type="function">
    <text evidence="1">Catalyzes the attachment of proline to tRNA(Pro) in a two-step reaction: proline is first activated by ATP to form Pro-AMP and then transferred to the acceptor end of tRNA(Pro).</text>
</comment>
<comment type="catalytic activity">
    <reaction evidence="1">
        <text>tRNA(Pro) + L-proline + ATP = L-prolyl-tRNA(Pro) + AMP + diphosphate</text>
        <dbReference type="Rhea" id="RHEA:14305"/>
        <dbReference type="Rhea" id="RHEA-COMP:9700"/>
        <dbReference type="Rhea" id="RHEA-COMP:9702"/>
        <dbReference type="ChEBI" id="CHEBI:30616"/>
        <dbReference type="ChEBI" id="CHEBI:33019"/>
        <dbReference type="ChEBI" id="CHEBI:60039"/>
        <dbReference type="ChEBI" id="CHEBI:78442"/>
        <dbReference type="ChEBI" id="CHEBI:78532"/>
        <dbReference type="ChEBI" id="CHEBI:456215"/>
        <dbReference type="EC" id="6.1.1.15"/>
    </reaction>
</comment>
<comment type="subunit">
    <text evidence="1">Homodimer.</text>
</comment>
<comment type="subcellular location">
    <subcellularLocation>
        <location evidence="1">Cytoplasm</location>
    </subcellularLocation>
</comment>
<comment type="domain">
    <text evidence="1">Consists of three domains: the N-terminal catalytic domain, the anticodon-binding domain and the C-terminal extension.</text>
</comment>
<comment type="similarity">
    <text evidence="1">Belongs to the class-II aminoacyl-tRNA synthetase family. ProS type 3 subfamily.</text>
</comment>
<evidence type="ECO:0000255" key="1">
    <source>
        <dbReference type="HAMAP-Rule" id="MF_01571"/>
    </source>
</evidence>
<sequence>MAKEQVQAITKMEEDFAQWYTDIVKKAELVDYSSVKGCMILRPYGYALWENMQKVMDEKLKATGHENVYMPMFIPESLLQKEKDHVEGFAPEVAWVTHGGDEKLAERLCVRPTSETLFCEHFSKIVQSYNDLPKLYNQWCSVVRWEKTTRPFLRTTEFLWQEGHTIHETAEESQAETLNILNLYASFCEDYLAIPVIKGQKTEKEKFAGAKATYTIESLMHDGKALQTGTSHNFGTNFSEAFDIKFLDRNGKWQYVHQTSWGVSTRMIGGLIMVHSDNNGLVMPPKVAPVQVVIVPIAQHKEGVLAKAIELQGHIQKVARVKIDASNKTPGWKFNEYEMKGIPIRLEVGPKDIEKNQVVLVRRDTKEKEFISMDQLEERIPALLEEIHNSLFNKAKVFRDENTYSVTSFEEMKKVADEKQGFIKAMWCGEVACEEKLKEEVGVSSRCMPFEQEHLADECVCCGKEAKQMVYWGKAY</sequence>
<name>SYP2_BACHK</name>
<accession>Q6HNZ7</accession>
<gene>
    <name evidence="1" type="primary">proS2</name>
    <name type="ordered locus">BT9727_0373</name>
</gene>
<keyword id="KW-0030">Aminoacyl-tRNA synthetase</keyword>
<keyword id="KW-0067">ATP-binding</keyword>
<keyword id="KW-0963">Cytoplasm</keyword>
<keyword id="KW-0436">Ligase</keyword>
<keyword id="KW-0547">Nucleotide-binding</keyword>
<keyword id="KW-0648">Protein biosynthesis</keyword>
<reference key="1">
    <citation type="journal article" date="2006" name="J. Bacteriol.">
        <title>Pathogenomic sequence analysis of Bacillus cereus and Bacillus thuringiensis isolates closely related to Bacillus anthracis.</title>
        <authorList>
            <person name="Han C.S."/>
            <person name="Xie G."/>
            <person name="Challacombe J.F."/>
            <person name="Altherr M.R."/>
            <person name="Bhotika S.S."/>
            <person name="Bruce D."/>
            <person name="Campbell C.S."/>
            <person name="Campbell M.L."/>
            <person name="Chen J."/>
            <person name="Chertkov O."/>
            <person name="Cleland C."/>
            <person name="Dimitrijevic M."/>
            <person name="Doggett N.A."/>
            <person name="Fawcett J.J."/>
            <person name="Glavina T."/>
            <person name="Goodwin L.A."/>
            <person name="Hill K.K."/>
            <person name="Hitchcock P."/>
            <person name="Jackson P.J."/>
            <person name="Keim P."/>
            <person name="Kewalramani A.R."/>
            <person name="Longmire J."/>
            <person name="Lucas S."/>
            <person name="Malfatti S."/>
            <person name="McMurry K."/>
            <person name="Meincke L.J."/>
            <person name="Misra M."/>
            <person name="Moseman B.L."/>
            <person name="Mundt M."/>
            <person name="Munk A.C."/>
            <person name="Okinaka R.T."/>
            <person name="Parson-Quintana B."/>
            <person name="Reilly L.P."/>
            <person name="Richardson P."/>
            <person name="Robinson D.L."/>
            <person name="Rubin E."/>
            <person name="Saunders E."/>
            <person name="Tapia R."/>
            <person name="Tesmer J.G."/>
            <person name="Thayer N."/>
            <person name="Thompson L.S."/>
            <person name="Tice H."/>
            <person name="Ticknor L.O."/>
            <person name="Wills P.L."/>
            <person name="Brettin T.S."/>
            <person name="Gilna P."/>
        </authorList>
    </citation>
    <scope>NUCLEOTIDE SEQUENCE [LARGE SCALE GENOMIC DNA]</scope>
    <source>
        <strain>97-27</strain>
    </source>
</reference>
<proteinExistence type="inferred from homology"/>
<feature type="chain" id="PRO_0000249122" description="Proline--tRNA ligase 2">
    <location>
        <begin position="1"/>
        <end position="476"/>
    </location>
</feature>